<gene>
    <name evidence="1" type="primary">trm1</name>
    <name type="ordered locus">Mlab_0794</name>
</gene>
<protein>
    <recommendedName>
        <fullName evidence="1">tRNA (guanine(26)-N(2))-dimethyltransferase</fullName>
        <ecNumber evidence="1">2.1.1.216</ecNumber>
    </recommendedName>
    <alternativeName>
        <fullName evidence="1">tRNA 2,2-dimethylguanosine-26 methyltransferase</fullName>
    </alternativeName>
    <alternativeName>
        <fullName evidence="1">tRNA(guanine-26,N(2)-N(2)) methyltransferase</fullName>
    </alternativeName>
    <alternativeName>
        <fullName evidence="1">tRNA(m(2,2)G26)dimethyltransferase</fullName>
    </alternativeName>
</protein>
<proteinExistence type="inferred from homology"/>
<feature type="chain" id="PRO_1000197033" description="tRNA (guanine(26)-N(2))-dimethyltransferase">
    <location>
        <begin position="1"/>
        <end position="379"/>
    </location>
</feature>
<feature type="domain" description="Trm1 methyltransferase" evidence="1">
    <location>
        <begin position="4"/>
        <end position="369"/>
    </location>
</feature>
<feature type="region of interest" description="Disordered" evidence="2">
    <location>
        <begin position="1"/>
        <end position="26"/>
    </location>
</feature>
<feature type="compositionally biased region" description="Polar residues" evidence="2">
    <location>
        <begin position="8"/>
        <end position="25"/>
    </location>
</feature>
<feature type="binding site" evidence="1">
    <location>
        <position position="41"/>
    </location>
    <ligand>
        <name>S-adenosyl-L-methionine</name>
        <dbReference type="ChEBI" id="CHEBI:59789"/>
    </ligand>
</feature>
<feature type="binding site" evidence="1">
    <location>
        <position position="66"/>
    </location>
    <ligand>
        <name>S-adenosyl-L-methionine</name>
        <dbReference type="ChEBI" id="CHEBI:59789"/>
    </ligand>
</feature>
<feature type="binding site" evidence="1">
    <location>
        <position position="82"/>
    </location>
    <ligand>
        <name>S-adenosyl-L-methionine</name>
        <dbReference type="ChEBI" id="CHEBI:59789"/>
    </ligand>
</feature>
<feature type="binding site" evidence="1">
    <location>
        <position position="108"/>
    </location>
    <ligand>
        <name>S-adenosyl-L-methionine</name>
        <dbReference type="ChEBI" id="CHEBI:59789"/>
    </ligand>
</feature>
<feature type="binding site" evidence="1">
    <location>
        <position position="109"/>
    </location>
    <ligand>
        <name>S-adenosyl-L-methionine</name>
        <dbReference type="ChEBI" id="CHEBI:59789"/>
    </ligand>
</feature>
<feature type="binding site" evidence="1">
    <location>
        <position position="237"/>
    </location>
    <ligand>
        <name>Zn(2+)</name>
        <dbReference type="ChEBI" id="CHEBI:29105"/>
    </ligand>
</feature>
<feature type="binding site" evidence="1">
    <location>
        <position position="240"/>
    </location>
    <ligand>
        <name>Zn(2+)</name>
        <dbReference type="ChEBI" id="CHEBI:29105"/>
    </ligand>
</feature>
<feature type="binding site" evidence="1">
    <location>
        <position position="257"/>
    </location>
    <ligand>
        <name>Zn(2+)</name>
        <dbReference type="ChEBI" id="CHEBI:29105"/>
    </ligand>
</feature>
<feature type="binding site" evidence="1">
    <location>
        <position position="260"/>
    </location>
    <ligand>
        <name>Zn(2+)</name>
        <dbReference type="ChEBI" id="CHEBI:29105"/>
    </ligand>
</feature>
<comment type="function">
    <text evidence="1">Dimethylates a single guanine residue at position 26 of a number of tRNAs using S-adenosyl-L-methionine as donor of the methyl groups.</text>
</comment>
<comment type="catalytic activity">
    <reaction evidence="1">
        <text>guanosine(26) in tRNA + 2 S-adenosyl-L-methionine = N(2)-dimethylguanosine(26) in tRNA + 2 S-adenosyl-L-homocysteine + 2 H(+)</text>
        <dbReference type="Rhea" id="RHEA:43140"/>
        <dbReference type="Rhea" id="RHEA-COMP:10359"/>
        <dbReference type="Rhea" id="RHEA-COMP:10360"/>
        <dbReference type="ChEBI" id="CHEBI:15378"/>
        <dbReference type="ChEBI" id="CHEBI:57856"/>
        <dbReference type="ChEBI" id="CHEBI:59789"/>
        <dbReference type="ChEBI" id="CHEBI:74269"/>
        <dbReference type="ChEBI" id="CHEBI:74513"/>
        <dbReference type="EC" id="2.1.1.216"/>
    </reaction>
</comment>
<comment type="similarity">
    <text evidence="1">Belongs to the class I-like SAM-binding methyltransferase superfamily. Trm1 family.</text>
</comment>
<evidence type="ECO:0000255" key="1">
    <source>
        <dbReference type="HAMAP-Rule" id="MF_00290"/>
    </source>
</evidence>
<evidence type="ECO:0000256" key="2">
    <source>
        <dbReference type="SAM" id="MobiDB-lite"/>
    </source>
</evidence>
<keyword id="KW-0479">Metal-binding</keyword>
<keyword id="KW-0489">Methyltransferase</keyword>
<keyword id="KW-1185">Reference proteome</keyword>
<keyword id="KW-0694">RNA-binding</keyword>
<keyword id="KW-0949">S-adenosyl-L-methionine</keyword>
<keyword id="KW-0808">Transferase</keyword>
<keyword id="KW-0819">tRNA processing</keyword>
<keyword id="KW-0820">tRNA-binding</keyword>
<keyword id="KW-0862">Zinc</keyword>
<name>TRM1_METLZ</name>
<reference key="1">
    <citation type="journal article" date="2009" name="Stand. Genomic Sci.">
        <title>Complete genome sequence of Methanocorpusculum labreanum type strain Z.</title>
        <authorList>
            <person name="Anderson I.J."/>
            <person name="Sieprawska-Lupa M."/>
            <person name="Goltsman E."/>
            <person name="Lapidus A."/>
            <person name="Copeland A."/>
            <person name="Glavina Del Rio T."/>
            <person name="Tice H."/>
            <person name="Dalin E."/>
            <person name="Barry K."/>
            <person name="Pitluck S."/>
            <person name="Hauser L."/>
            <person name="Land M."/>
            <person name="Lucas S."/>
            <person name="Richardson P."/>
            <person name="Whitman W.B."/>
            <person name="Kyrpides N.C."/>
        </authorList>
    </citation>
    <scope>NUCLEOTIDE SEQUENCE [LARGE SCALE GENOMIC DNA]</scope>
    <source>
        <strain>ATCC 43576 / DSM 4855 / Z</strain>
    </source>
</reference>
<organism>
    <name type="scientific">Methanocorpusculum labreanum (strain ATCC 43576 / DSM 4855 / Z)</name>
    <dbReference type="NCBI Taxonomy" id="410358"/>
    <lineage>
        <taxon>Archaea</taxon>
        <taxon>Methanobacteriati</taxon>
        <taxon>Methanobacteriota</taxon>
        <taxon>Stenosarchaea group</taxon>
        <taxon>Methanomicrobia</taxon>
        <taxon>Methanomicrobiales</taxon>
        <taxon>Methanocorpusculaceae</taxon>
        <taxon>Methanocorpusculum</taxon>
    </lineage>
</organism>
<sequence>MECREITEGSTTFTAPVQDETTQFPPGSAPVFYNTKMEFNRDMTVLLTKIVQPEDYLDAMAATGVRGLRIANEAKIPVTINDRDEQAVKIIKYNAEKLGGDISVTCDDANRLMCTSRFDSIDLDPFGTPVPFLDAASRAAKHYLFVTATDTAPLCGAHFKAGCRRYFATPRNTEYHAEVGLRMMMGTMARELVKYDRGMKPILSYAKSHYFRSHVRVLGKVTAADETLAQIGFVMQCPKCLYREEQKGSLYPKMHICPHCGVETVPVGPLWMGPLQEKEILAEMQTALAELQFGTKRQMEKMLTFLLAEPETCTYYDYHIISRNMKVSPPNMEELIASLNEAGYYTTRTHFCDTGIKTTAPLPLIEEKIRLWNAKNLQM</sequence>
<accession>A2SRK9</accession>
<dbReference type="EC" id="2.1.1.216" evidence="1"/>
<dbReference type="EMBL" id="CP000559">
    <property type="protein sequence ID" value="ABN06965.1"/>
    <property type="molecule type" value="Genomic_DNA"/>
</dbReference>
<dbReference type="RefSeq" id="WP_011833166.1">
    <property type="nucleotide sequence ID" value="NC_008942.1"/>
</dbReference>
<dbReference type="SMR" id="A2SRK9"/>
<dbReference type="STRING" id="410358.Mlab_0794"/>
<dbReference type="GeneID" id="4795339"/>
<dbReference type="KEGG" id="mla:Mlab_0794"/>
<dbReference type="eggNOG" id="arCOG01219">
    <property type="taxonomic scope" value="Archaea"/>
</dbReference>
<dbReference type="HOGENOM" id="CLU_010862_5_1_2"/>
<dbReference type="OrthoDB" id="372177at2157"/>
<dbReference type="Proteomes" id="UP000000365">
    <property type="component" value="Chromosome"/>
</dbReference>
<dbReference type="GO" id="GO:0160104">
    <property type="term" value="F:tRNA (guanine(26)-N2)-dimethyltransferase activity"/>
    <property type="evidence" value="ECO:0007669"/>
    <property type="project" value="UniProtKB-UniRule"/>
</dbReference>
<dbReference type="GO" id="GO:0000049">
    <property type="term" value="F:tRNA binding"/>
    <property type="evidence" value="ECO:0007669"/>
    <property type="project" value="UniProtKB-KW"/>
</dbReference>
<dbReference type="GO" id="GO:0002940">
    <property type="term" value="P:tRNA N2-guanine methylation"/>
    <property type="evidence" value="ECO:0007669"/>
    <property type="project" value="TreeGrafter"/>
</dbReference>
<dbReference type="CDD" id="cd02440">
    <property type="entry name" value="AdoMet_MTases"/>
    <property type="match status" value="1"/>
</dbReference>
<dbReference type="Gene3D" id="3.30.56.70">
    <property type="entry name" value="N2,N2-dimethylguanosine tRNA methyltransferase, C-terminal domain"/>
    <property type="match status" value="1"/>
</dbReference>
<dbReference type="Gene3D" id="3.40.50.150">
    <property type="entry name" value="Vaccinia Virus protein VP39"/>
    <property type="match status" value="1"/>
</dbReference>
<dbReference type="HAMAP" id="MF_00290">
    <property type="entry name" value="tRNA_dimethyltr_TRM1"/>
    <property type="match status" value="1"/>
</dbReference>
<dbReference type="InterPro" id="IPR029063">
    <property type="entry name" value="SAM-dependent_MTases_sf"/>
</dbReference>
<dbReference type="InterPro" id="IPR002905">
    <property type="entry name" value="Trm1"/>
</dbReference>
<dbReference type="InterPro" id="IPR022923">
    <property type="entry name" value="TRM1_arc_bac"/>
</dbReference>
<dbReference type="InterPro" id="IPR042296">
    <property type="entry name" value="tRNA_met_Trm1_C"/>
</dbReference>
<dbReference type="NCBIfam" id="TIGR00308">
    <property type="entry name" value="TRM1"/>
    <property type="match status" value="1"/>
</dbReference>
<dbReference type="PANTHER" id="PTHR10631">
    <property type="entry name" value="N 2 ,N 2 -DIMETHYLGUANOSINE TRNA METHYLTRANSFERASE"/>
    <property type="match status" value="1"/>
</dbReference>
<dbReference type="PANTHER" id="PTHR10631:SF3">
    <property type="entry name" value="TRNA (GUANINE(26)-N(2))-DIMETHYLTRANSFERASE"/>
    <property type="match status" value="1"/>
</dbReference>
<dbReference type="Pfam" id="PF02005">
    <property type="entry name" value="TRM"/>
    <property type="match status" value="1"/>
</dbReference>
<dbReference type="SUPFAM" id="SSF53335">
    <property type="entry name" value="S-adenosyl-L-methionine-dependent methyltransferases"/>
    <property type="match status" value="1"/>
</dbReference>
<dbReference type="PROSITE" id="PS51626">
    <property type="entry name" value="SAM_MT_TRM1"/>
    <property type="match status" value="1"/>
</dbReference>